<dbReference type="EC" id="7.1.1.-" evidence="1"/>
<dbReference type="EMBL" id="CP000267">
    <property type="protein sequence ID" value="ABD69228.1"/>
    <property type="molecule type" value="Genomic_DNA"/>
</dbReference>
<dbReference type="RefSeq" id="WP_011463796.1">
    <property type="nucleotide sequence ID" value="NC_007908.1"/>
</dbReference>
<dbReference type="SMR" id="Q21YC5"/>
<dbReference type="STRING" id="338969.Rfer_1495"/>
<dbReference type="KEGG" id="rfr:Rfer_1495"/>
<dbReference type="eggNOG" id="COG0852">
    <property type="taxonomic scope" value="Bacteria"/>
</dbReference>
<dbReference type="HOGENOM" id="CLU_042628_2_1_4"/>
<dbReference type="OrthoDB" id="9803286at2"/>
<dbReference type="Proteomes" id="UP000008332">
    <property type="component" value="Chromosome"/>
</dbReference>
<dbReference type="GO" id="GO:0005886">
    <property type="term" value="C:plasma membrane"/>
    <property type="evidence" value="ECO:0007669"/>
    <property type="project" value="UniProtKB-SubCell"/>
</dbReference>
<dbReference type="GO" id="GO:0008137">
    <property type="term" value="F:NADH dehydrogenase (ubiquinone) activity"/>
    <property type="evidence" value="ECO:0007669"/>
    <property type="project" value="InterPro"/>
</dbReference>
<dbReference type="GO" id="GO:0050136">
    <property type="term" value="F:NADH:ubiquinone reductase (non-electrogenic) activity"/>
    <property type="evidence" value="ECO:0007669"/>
    <property type="project" value="UniProtKB-UniRule"/>
</dbReference>
<dbReference type="GO" id="GO:0048038">
    <property type="term" value="F:quinone binding"/>
    <property type="evidence" value="ECO:0007669"/>
    <property type="project" value="UniProtKB-KW"/>
</dbReference>
<dbReference type="Gene3D" id="3.30.460.80">
    <property type="entry name" value="NADH:ubiquinone oxidoreductase, 30kDa subunit"/>
    <property type="match status" value="1"/>
</dbReference>
<dbReference type="HAMAP" id="MF_01357">
    <property type="entry name" value="NDH1_NuoC"/>
    <property type="match status" value="1"/>
</dbReference>
<dbReference type="InterPro" id="IPR010218">
    <property type="entry name" value="NADH_DH_suC"/>
</dbReference>
<dbReference type="InterPro" id="IPR037232">
    <property type="entry name" value="NADH_quin_OxRdtase_su_C/D-like"/>
</dbReference>
<dbReference type="InterPro" id="IPR001268">
    <property type="entry name" value="NADH_UbQ_OxRdtase_30kDa_su"/>
</dbReference>
<dbReference type="InterPro" id="IPR020396">
    <property type="entry name" value="NADH_UbQ_OxRdtase_CS"/>
</dbReference>
<dbReference type="NCBIfam" id="TIGR01961">
    <property type="entry name" value="NuoC_fam"/>
    <property type="match status" value="1"/>
</dbReference>
<dbReference type="NCBIfam" id="NF004730">
    <property type="entry name" value="PRK06074.1-1"/>
    <property type="match status" value="1"/>
</dbReference>
<dbReference type="PANTHER" id="PTHR10884:SF14">
    <property type="entry name" value="NADH DEHYDROGENASE [UBIQUINONE] IRON-SULFUR PROTEIN 3, MITOCHONDRIAL"/>
    <property type="match status" value="1"/>
</dbReference>
<dbReference type="PANTHER" id="PTHR10884">
    <property type="entry name" value="NADH DEHYDROGENASE UBIQUINONE IRON-SULFUR PROTEIN 3"/>
    <property type="match status" value="1"/>
</dbReference>
<dbReference type="Pfam" id="PF00329">
    <property type="entry name" value="Complex1_30kDa"/>
    <property type="match status" value="1"/>
</dbReference>
<dbReference type="SUPFAM" id="SSF143243">
    <property type="entry name" value="Nqo5-like"/>
    <property type="match status" value="1"/>
</dbReference>
<dbReference type="PROSITE" id="PS00542">
    <property type="entry name" value="COMPLEX1_30K"/>
    <property type="match status" value="1"/>
</dbReference>
<gene>
    <name evidence="1" type="primary">nuoC</name>
    <name type="ordered locus">Rfer_1495</name>
</gene>
<protein>
    <recommendedName>
        <fullName evidence="1">NADH-quinone oxidoreductase subunit C</fullName>
        <ecNumber evidence="1">7.1.1.-</ecNumber>
    </recommendedName>
    <alternativeName>
        <fullName evidence="1">NADH dehydrogenase I subunit C</fullName>
    </alternativeName>
    <alternativeName>
        <fullName evidence="1">NDH-1 subunit C</fullName>
    </alternativeName>
</protein>
<feature type="chain" id="PRO_0000358186" description="NADH-quinone oxidoreductase subunit C">
    <location>
        <begin position="1"/>
        <end position="202"/>
    </location>
</feature>
<proteinExistence type="inferred from homology"/>
<evidence type="ECO:0000255" key="1">
    <source>
        <dbReference type="HAMAP-Rule" id="MF_01357"/>
    </source>
</evidence>
<organism>
    <name type="scientific">Albidiferax ferrireducens (strain ATCC BAA-621 / DSM 15236 / T118)</name>
    <name type="common">Rhodoferax ferrireducens</name>
    <dbReference type="NCBI Taxonomy" id="338969"/>
    <lineage>
        <taxon>Bacteria</taxon>
        <taxon>Pseudomonadati</taxon>
        <taxon>Pseudomonadota</taxon>
        <taxon>Betaproteobacteria</taxon>
        <taxon>Burkholderiales</taxon>
        <taxon>Comamonadaceae</taxon>
        <taxon>Rhodoferax</taxon>
    </lineage>
</organism>
<reference key="1">
    <citation type="submission" date="2006-02" db="EMBL/GenBank/DDBJ databases">
        <title>Complete sequence of chromosome of Rhodoferax ferrireducens DSM 15236.</title>
        <authorList>
            <person name="Copeland A."/>
            <person name="Lucas S."/>
            <person name="Lapidus A."/>
            <person name="Barry K."/>
            <person name="Detter J.C."/>
            <person name="Glavina del Rio T."/>
            <person name="Hammon N."/>
            <person name="Israni S."/>
            <person name="Pitluck S."/>
            <person name="Brettin T."/>
            <person name="Bruce D."/>
            <person name="Han C."/>
            <person name="Tapia R."/>
            <person name="Gilna P."/>
            <person name="Kiss H."/>
            <person name="Schmutz J."/>
            <person name="Larimer F."/>
            <person name="Land M."/>
            <person name="Kyrpides N."/>
            <person name="Ivanova N."/>
            <person name="Richardson P."/>
        </authorList>
    </citation>
    <scope>NUCLEOTIDE SEQUENCE [LARGE SCALE GENOMIC DNA]</scope>
    <source>
        <strain>ATCC BAA-621 / DSM 15236 / T118</strain>
    </source>
</reference>
<sequence length="202" mass="23069">MTSYAVNPQSIKVHVEAALGDLLISSVLRLDELTVVVDGAHYLQAAKILRDDPNCRFEQLMDLCGVDYSTYKDQPQTGLRYCVVSHLLSVSLNQRVRLKVFAPDDNLPVVQSLCDVWSSANWFEREAFDLFGIVFEGHADLRRILTDYGFVGHPFRKDFPVSGHVEMRYDAELKRVVYQPVTIEPREITPRIIREDNYGGLH</sequence>
<accession>Q21YC5</accession>
<comment type="function">
    <text evidence="1">NDH-1 shuttles electrons from NADH, via FMN and iron-sulfur (Fe-S) centers, to quinones in the respiratory chain. The immediate electron acceptor for the enzyme in this species is believed to be ubiquinone. Couples the redox reaction to proton translocation (for every two electrons transferred, four hydrogen ions are translocated across the cytoplasmic membrane), and thus conserves the redox energy in a proton gradient.</text>
</comment>
<comment type="catalytic activity">
    <reaction evidence="1">
        <text>a quinone + NADH + 5 H(+)(in) = a quinol + NAD(+) + 4 H(+)(out)</text>
        <dbReference type="Rhea" id="RHEA:57888"/>
        <dbReference type="ChEBI" id="CHEBI:15378"/>
        <dbReference type="ChEBI" id="CHEBI:24646"/>
        <dbReference type="ChEBI" id="CHEBI:57540"/>
        <dbReference type="ChEBI" id="CHEBI:57945"/>
        <dbReference type="ChEBI" id="CHEBI:132124"/>
    </reaction>
</comment>
<comment type="subunit">
    <text evidence="1">NDH-1 is composed of 14 different subunits. Subunits NuoB, C, D, E, F, and G constitute the peripheral sector of the complex.</text>
</comment>
<comment type="subcellular location">
    <subcellularLocation>
        <location evidence="1">Cell inner membrane</location>
        <topology evidence="1">Peripheral membrane protein</topology>
        <orientation evidence="1">Cytoplasmic side</orientation>
    </subcellularLocation>
</comment>
<comment type="similarity">
    <text evidence="1">Belongs to the complex I 30 kDa subunit family.</text>
</comment>
<name>NUOC_ALBFT</name>
<keyword id="KW-0997">Cell inner membrane</keyword>
<keyword id="KW-1003">Cell membrane</keyword>
<keyword id="KW-0472">Membrane</keyword>
<keyword id="KW-0520">NAD</keyword>
<keyword id="KW-0874">Quinone</keyword>
<keyword id="KW-1185">Reference proteome</keyword>
<keyword id="KW-1278">Translocase</keyword>
<keyword id="KW-0813">Transport</keyword>
<keyword id="KW-0830">Ubiquinone</keyword>